<gene>
    <name evidence="1" type="primary">gN</name>
    <name type="ORF">9A</name>
</gene>
<reference key="1">
    <citation type="journal article" date="1986" name="J. Gen. Virol.">
        <title>The complete DNA sequence of varicella-zoster virus.</title>
        <authorList>
            <person name="Davison A.J."/>
            <person name="Scott J.E."/>
        </authorList>
    </citation>
    <scope>NUCLEOTIDE SEQUENCE [LARGE SCALE GENOMIC DNA]</scope>
</reference>
<evidence type="ECO:0000255" key="1">
    <source>
        <dbReference type="HAMAP-Rule" id="MF_04037"/>
    </source>
</evidence>
<sequence>MGSITASFILITMQILFFCEDSSGEPNFAERNFWHASCSARGVYIDGSMITTLFFYASLLGVCVALISLAYHACFRLFTRSVLRSTW</sequence>
<dbReference type="EMBL" id="X04370">
    <property type="protein sequence ID" value="CAH19068.1"/>
    <property type="molecule type" value="Genomic_DNA"/>
</dbReference>
<dbReference type="IntAct" id="Q65ZG0">
    <property type="interactions" value="7"/>
</dbReference>
<dbReference type="MINT" id="Q65ZG0"/>
<dbReference type="Proteomes" id="UP000002602">
    <property type="component" value="Genome"/>
</dbReference>
<dbReference type="GO" id="GO:0044177">
    <property type="term" value="C:host cell Golgi apparatus"/>
    <property type="evidence" value="ECO:0007669"/>
    <property type="project" value="UniProtKB-SubCell"/>
</dbReference>
<dbReference type="GO" id="GO:0033644">
    <property type="term" value="C:host cell membrane"/>
    <property type="evidence" value="ECO:0007669"/>
    <property type="project" value="UniProtKB-SubCell"/>
</dbReference>
<dbReference type="GO" id="GO:0016020">
    <property type="term" value="C:membrane"/>
    <property type="evidence" value="ECO:0007669"/>
    <property type="project" value="UniProtKB-KW"/>
</dbReference>
<dbReference type="GO" id="GO:0019031">
    <property type="term" value="C:viral envelope"/>
    <property type="evidence" value="ECO:0007669"/>
    <property type="project" value="UniProtKB-KW"/>
</dbReference>
<dbReference type="GO" id="GO:0055036">
    <property type="term" value="C:virion membrane"/>
    <property type="evidence" value="ECO:0007669"/>
    <property type="project" value="UniProtKB-SubCell"/>
</dbReference>
<dbReference type="HAMAP" id="MF_04037">
    <property type="entry name" value="HSV_GN"/>
    <property type="match status" value="1"/>
</dbReference>
<dbReference type="InterPro" id="IPR008647">
    <property type="entry name" value="GN_domain"/>
</dbReference>
<dbReference type="InterPro" id="IPR034707">
    <property type="entry name" value="HSV_GN"/>
</dbReference>
<dbReference type="Pfam" id="PF05702">
    <property type="entry name" value="Herpes_UL49_5"/>
    <property type="match status" value="1"/>
</dbReference>
<name>GN_VZVD</name>
<accession>Q65ZG0</accession>
<keyword id="KW-1015">Disulfide bond</keyword>
<keyword id="KW-1040">Host Golgi apparatus</keyword>
<keyword id="KW-1043">Host membrane</keyword>
<keyword id="KW-0472">Membrane</keyword>
<keyword id="KW-1185">Reference proteome</keyword>
<keyword id="KW-0732">Signal</keyword>
<keyword id="KW-0812">Transmembrane</keyword>
<keyword id="KW-1133">Transmembrane helix</keyword>
<keyword id="KW-0261">Viral envelope protein</keyword>
<keyword id="KW-0946">Virion</keyword>
<organism>
    <name type="scientific">Varicella-zoster virus (strain Dumas)</name>
    <name type="common">HHV-3</name>
    <name type="synonym">Human herpesvirus 3</name>
    <dbReference type="NCBI Taxonomy" id="10338"/>
    <lineage>
        <taxon>Viruses</taxon>
        <taxon>Duplodnaviria</taxon>
        <taxon>Heunggongvirae</taxon>
        <taxon>Peploviricota</taxon>
        <taxon>Herviviricetes</taxon>
        <taxon>Herpesvirales</taxon>
        <taxon>Orthoherpesviridae</taxon>
        <taxon>Alphaherpesvirinae</taxon>
        <taxon>Varicellovirus</taxon>
        <taxon>Varicellovirus humanalpha3</taxon>
        <taxon>Human herpesvirus 3</taxon>
    </lineage>
</organism>
<proteinExistence type="inferred from homology"/>
<protein>
    <recommendedName>
        <fullName evidence="1">Envelope glycoprotein N</fullName>
    </recommendedName>
</protein>
<organismHost>
    <name type="scientific">Homo sapiens</name>
    <name type="common">Human</name>
    <dbReference type="NCBI Taxonomy" id="9606"/>
</organismHost>
<feature type="signal peptide" evidence="1">
    <location>
        <begin position="1"/>
        <end position="24"/>
    </location>
</feature>
<feature type="chain" id="PRO_0000339176" description="Envelope glycoprotein N" evidence="1">
    <location>
        <begin position="25"/>
        <end position="87"/>
    </location>
</feature>
<feature type="topological domain" description="Virion surface" evidence="1">
    <location>
        <begin position="25"/>
        <end position="48"/>
    </location>
</feature>
<feature type="transmembrane region" description="Helical" evidence="1">
    <location>
        <begin position="49"/>
        <end position="69"/>
    </location>
</feature>
<feature type="topological domain" description="Intravirion" evidence="1">
    <location>
        <begin position="70"/>
        <end position="87"/>
    </location>
</feature>
<feature type="disulfide bond" description="Interchain (with gM)" evidence="1">
    <location>
        <position position="38"/>
    </location>
</feature>
<comment type="function">
    <text evidence="1">Envelope glycoprotein necessary for proper maturation of gM and modulation of its membrane fusion activity. Also plays a critical role in virion morphogenesis.</text>
</comment>
<comment type="subunit">
    <text evidence="1">Interacts (via N-terminus) with gM (via N-terminus). The gM-gN heterodimer forms the gCII complex.</text>
</comment>
<comment type="subcellular location">
    <subcellularLocation>
        <location evidence="1">Virion membrane</location>
        <topology evidence="1">Single-pass type I membrane protein</topology>
    </subcellularLocation>
    <subcellularLocation>
        <location evidence="1">Host membrane</location>
        <topology evidence="1">Single-pass type I membrane protein</topology>
    </subcellularLocation>
    <subcellularLocation>
        <location evidence="1">Host Golgi apparatus</location>
        <location evidence="1">Host trans-Golgi network</location>
    </subcellularLocation>
    <text evidence="1">When coexpressed with gM, localizes in the host trans-Golgi network.</text>
</comment>
<comment type="similarity">
    <text evidence="1">Belongs to the herpesviridae glycoprotein N family.</text>
</comment>